<comment type="function">
    <text evidence="1">Single strand-specific metallo-endoribonuclease involved in late-stage 70S ribosome quality control and in maturation of the 3' terminus of the 16S rRNA.</text>
</comment>
<comment type="cofactor">
    <cofactor evidence="1">
        <name>Zn(2+)</name>
        <dbReference type="ChEBI" id="CHEBI:29105"/>
    </cofactor>
    <text evidence="1">Binds 1 zinc ion.</text>
</comment>
<comment type="subcellular location">
    <subcellularLocation>
        <location evidence="1">Cytoplasm</location>
    </subcellularLocation>
</comment>
<comment type="similarity">
    <text evidence="1">Belongs to the endoribonuclease YbeY family.</text>
</comment>
<gene>
    <name evidence="1" type="primary">ybeY</name>
    <name type="ordered locus">BVU_1217</name>
</gene>
<proteinExistence type="inferred from homology"/>
<keyword id="KW-0963">Cytoplasm</keyword>
<keyword id="KW-0255">Endonuclease</keyword>
<keyword id="KW-0378">Hydrolase</keyword>
<keyword id="KW-0479">Metal-binding</keyword>
<keyword id="KW-0540">Nuclease</keyword>
<keyword id="KW-0690">Ribosome biogenesis</keyword>
<keyword id="KW-0698">rRNA processing</keyword>
<keyword id="KW-0862">Zinc</keyword>
<feature type="chain" id="PRO_0000321772" description="Endoribonuclease YbeY">
    <location>
        <begin position="1"/>
        <end position="138"/>
    </location>
</feature>
<feature type="binding site" evidence="1">
    <location>
        <position position="106"/>
    </location>
    <ligand>
        <name>Zn(2+)</name>
        <dbReference type="ChEBI" id="CHEBI:29105"/>
        <note>catalytic</note>
    </ligand>
</feature>
<feature type="binding site" evidence="1">
    <location>
        <position position="110"/>
    </location>
    <ligand>
        <name>Zn(2+)</name>
        <dbReference type="ChEBI" id="CHEBI:29105"/>
        <note>catalytic</note>
    </ligand>
</feature>
<feature type="binding site" evidence="1">
    <location>
        <position position="116"/>
    </location>
    <ligand>
        <name>Zn(2+)</name>
        <dbReference type="ChEBI" id="CHEBI:29105"/>
        <note>catalytic</note>
    </ligand>
</feature>
<name>YBEY_PHOV8</name>
<accession>A6KZP3</accession>
<protein>
    <recommendedName>
        <fullName evidence="1">Endoribonuclease YbeY</fullName>
        <ecNumber evidence="1">3.1.-.-</ecNumber>
    </recommendedName>
</protein>
<reference key="1">
    <citation type="journal article" date="2007" name="PLoS Biol.">
        <title>Evolution of symbiotic bacteria in the distal human intestine.</title>
        <authorList>
            <person name="Xu J."/>
            <person name="Mahowald M.A."/>
            <person name="Ley R.E."/>
            <person name="Lozupone C.A."/>
            <person name="Hamady M."/>
            <person name="Martens E.C."/>
            <person name="Henrissat B."/>
            <person name="Coutinho P.M."/>
            <person name="Minx P."/>
            <person name="Latreille P."/>
            <person name="Cordum H."/>
            <person name="Van Brunt A."/>
            <person name="Kim K."/>
            <person name="Fulton R.S."/>
            <person name="Fulton L.A."/>
            <person name="Clifton S.W."/>
            <person name="Wilson R.K."/>
            <person name="Knight R.D."/>
            <person name="Gordon J.I."/>
        </authorList>
    </citation>
    <scope>NUCLEOTIDE SEQUENCE [LARGE SCALE GENOMIC DNA]</scope>
    <source>
        <strain>ATCC 8482 / DSM 1447 / JCM 5826 / CCUG 4940 / NBRC 14291 / NCTC 11154</strain>
    </source>
</reference>
<dbReference type="EC" id="3.1.-.-" evidence="1"/>
<dbReference type="EMBL" id="CP000139">
    <property type="protein sequence ID" value="ABR38907.1"/>
    <property type="molecule type" value="Genomic_DNA"/>
</dbReference>
<dbReference type="RefSeq" id="WP_005843908.1">
    <property type="nucleotide sequence ID" value="NZ_JANSWM010000092.1"/>
</dbReference>
<dbReference type="SMR" id="A6KZP3"/>
<dbReference type="STRING" id="435590.BVU_1217"/>
<dbReference type="PaxDb" id="435590-BVU_1217"/>
<dbReference type="GeneID" id="5302183"/>
<dbReference type="KEGG" id="bvu:BVU_1217"/>
<dbReference type="eggNOG" id="COG0319">
    <property type="taxonomic scope" value="Bacteria"/>
</dbReference>
<dbReference type="HOGENOM" id="CLU_106710_3_3_10"/>
<dbReference type="BioCyc" id="BVUL435590:G1G59-1267-MONOMER"/>
<dbReference type="Proteomes" id="UP000002861">
    <property type="component" value="Chromosome"/>
</dbReference>
<dbReference type="GO" id="GO:0005737">
    <property type="term" value="C:cytoplasm"/>
    <property type="evidence" value="ECO:0007669"/>
    <property type="project" value="UniProtKB-SubCell"/>
</dbReference>
<dbReference type="GO" id="GO:0004222">
    <property type="term" value="F:metalloendopeptidase activity"/>
    <property type="evidence" value="ECO:0007669"/>
    <property type="project" value="InterPro"/>
</dbReference>
<dbReference type="GO" id="GO:0004521">
    <property type="term" value="F:RNA endonuclease activity"/>
    <property type="evidence" value="ECO:0007669"/>
    <property type="project" value="UniProtKB-UniRule"/>
</dbReference>
<dbReference type="GO" id="GO:0008270">
    <property type="term" value="F:zinc ion binding"/>
    <property type="evidence" value="ECO:0007669"/>
    <property type="project" value="UniProtKB-UniRule"/>
</dbReference>
<dbReference type="GO" id="GO:0006364">
    <property type="term" value="P:rRNA processing"/>
    <property type="evidence" value="ECO:0007669"/>
    <property type="project" value="UniProtKB-UniRule"/>
</dbReference>
<dbReference type="Gene3D" id="3.40.390.30">
    <property type="entry name" value="Metalloproteases ('zincins'), catalytic domain"/>
    <property type="match status" value="1"/>
</dbReference>
<dbReference type="HAMAP" id="MF_00009">
    <property type="entry name" value="Endoribonucl_YbeY"/>
    <property type="match status" value="1"/>
</dbReference>
<dbReference type="InterPro" id="IPR023091">
    <property type="entry name" value="MetalPrtase_cat_dom_sf_prd"/>
</dbReference>
<dbReference type="InterPro" id="IPR002036">
    <property type="entry name" value="YbeY"/>
</dbReference>
<dbReference type="NCBIfam" id="TIGR00043">
    <property type="entry name" value="rRNA maturation RNase YbeY"/>
    <property type="match status" value="1"/>
</dbReference>
<dbReference type="PANTHER" id="PTHR46986">
    <property type="entry name" value="ENDORIBONUCLEASE YBEY, CHLOROPLASTIC"/>
    <property type="match status" value="1"/>
</dbReference>
<dbReference type="PANTHER" id="PTHR46986:SF1">
    <property type="entry name" value="ENDORIBONUCLEASE YBEY, CHLOROPLASTIC"/>
    <property type="match status" value="1"/>
</dbReference>
<dbReference type="Pfam" id="PF02130">
    <property type="entry name" value="YbeY"/>
    <property type="match status" value="1"/>
</dbReference>
<dbReference type="SUPFAM" id="SSF55486">
    <property type="entry name" value="Metalloproteases ('zincins'), catalytic domain"/>
    <property type="match status" value="1"/>
</dbReference>
<sequence length="138" mass="15838">MISYQTEGVKMPDIKKKETTGWIKEVAACYGKRVGEIAYIFCSDDKILEVNRQYLQHDYYTDIITFDYCEGDRISGDLFISLDTVRSNAEQFEQPYDRELHRVIIHGILHLCGINDKGPGEREIMEAAENKALALISL</sequence>
<organism>
    <name type="scientific">Phocaeicola vulgatus (strain ATCC 8482 / DSM 1447 / JCM 5826 / CCUG 4940 / NBRC 14291 / NCTC 11154)</name>
    <name type="common">Bacteroides vulgatus</name>
    <dbReference type="NCBI Taxonomy" id="435590"/>
    <lineage>
        <taxon>Bacteria</taxon>
        <taxon>Pseudomonadati</taxon>
        <taxon>Bacteroidota</taxon>
        <taxon>Bacteroidia</taxon>
        <taxon>Bacteroidales</taxon>
        <taxon>Bacteroidaceae</taxon>
        <taxon>Phocaeicola</taxon>
    </lineage>
</organism>
<evidence type="ECO:0000255" key="1">
    <source>
        <dbReference type="HAMAP-Rule" id="MF_00009"/>
    </source>
</evidence>